<comment type="subcellular location">
    <subcellularLocation>
        <location evidence="1">Cell membrane</location>
        <topology evidence="1">Single-pass membrane protein</topology>
    </subcellularLocation>
</comment>
<comment type="similarity">
    <text evidence="1">Belongs to the UPF0154 family.</text>
</comment>
<accession>Q5FJL6</accession>
<protein>
    <recommendedName>
        <fullName evidence="1">UPF0154 protein LBA1278</fullName>
    </recommendedName>
</protein>
<sequence length="72" mass="8148">MNLGLAIFLIIIALLVGATAGFYGARAYMKKYFKENPPISEEMIVAMMSQMGQKPSNKKVHQVMNMMKHQQK</sequence>
<feature type="chain" id="PRO_1000005626" description="UPF0154 protein LBA1278">
    <location>
        <begin position="1"/>
        <end position="72"/>
    </location>
</feature>
<feature type="transmembrane region" description="Helical" evidence="1">
    <location>
        <begin position="3"/>
        <end position="23"/>
    </location>
</feature>
<reference key="1">
    <citation type="journal article" date="2005" name="Proc. Natl. Acad. Sci. U.S.A.">
        <title>Complete genome sequence of the probiotic lactic acid bacterium Lactobacillus acidophilus NCFM.</title>
        <authorList>
            <person name="Altermann E."/>
            <person name="Russell W.M."/>
            <person name="Azcarate-Peril M.A."/>
            <person name="Barrangou R."/>
            <person name="Buck B.L."/>
            <person name="McAuliffe O."/>
            <person name="Souther N."/>
            <person name="Dobson A."/>
            <person name="Duong T."/>
            <person name="Callanan M."/>
            <person name="Lick S."/>
            <person name="Hamrick A."/>
            <person name="Cano R."/>
            <person name="Klaenhammer T.R."/>
        </authorList>
    </citation>
    <scope>NUCLEOTIDE SEQUENCE [LARGE SCALE GENOMIC DNA]</scope>
    <source>
        <strain>ATCC 700396 / NCK56 / N2 / NCFM</strain>
    </source>
</reference>
<dbReference type="EMBL" id="CP000033">
    <property type="protein sequence ID" value="AAV43108.1"/>
    <property type="molecule type" value="Genomic_DNA"/>
</dbReference>
<dbReference type="RefSeq" id="WP_003547849.1">
    <property type="nucleotide sequence ID" value="NC_006814.3"/>
</dbReference>
<dbReference type="RefSeq" id="YP_194139.1">
    <property type="nucleotide sequence ID" value="NC_006814.3"/>
</dbReference>
<dbReference type="SMR" id="Q5FJL6"/>
<dbReference type="STRING" id="272621.LBA1278"/>
<dbReference type="DNASU" id="3252317"/>
<dbReference type="KEGG" id="lac:LBA1278"/>
<dbReference type="PATRIC" id="fig|272621.13.peg.1210"/>
<dbReference type="eggNOG" id="COG3763">
    <property type="taxonomic scope" value="Bacteria"/>
</dbReference>
<dbReference type="HOGENOM" id="CLU_180108_0_1_9"/>
<dbReference type="OrthoDB" id="1769076at2"/>
<dbReference type="BioCyc" id="LACI272621:G1G49-1258-MONOMER"/>
<dbReference type="Proteomes" id="UP000006381">
    <property type="component" value="Chromosome"/>
</dbReference>
<dbReference type="GO" id="GO:0005886">
    <property type="term" value="C:plasma membrane"/>
    <property type="evidence" value="ECO:0007669"/>
    <property type="project" value="UniProtKB-SubCell"/>
</dbReference>
<dbReference type="HAMAP" id="MF_00363">
    <property type="entry name" value="UPF0154"/>
    <property type="match status" value="1"/>
</dbReference>
<dbReference type="InterPro" id="IPR005359">
    <property type="entry name" value="UPF0154"/>
</dbReference>
<dbReference type="Pfam" id="PF03672">
    <property type="entry name" value="UPF0154"/>
    <property type="match status" value="1"/>
</dbReference>
<evidence type="ECO:0000255" key="1">
    <source>
        <dbReference type="HAMAP-Rule" id="MF_00363"/>
    </source>
</evidence>
<proteinExistence type="inferred from homology"/>
<keyword id="KW-1003">Cell membrane</keyword>
<keyword id="KW-0472">Membrane</keyword>
<keyword id="KW-1185">Reference proteome</keyword>
<keyword id="KW-0812">Transmembrane</keyword>
<keyword id="KW-1133">Transmembrane helix</keyword>
<gene>
    <name type="ordered locus">LBA1278</name>
</gene>
<name>Y1278_LACAC</name>
<organism>
    <name type="scientific">Lactobacillus acidophilus (strain ATCC 700396 / NCK56 / N2 / NCFM)</name>
    <dbReference type="NCBI Taxonomy" id="272621"/>
    <lineage>
        <taxon>Bacteria</taxon>
        <taxon>Bacillati</taxon>
        <taxon>Bacillota</taxon>
        <taxon>Bacilli</taxon>
        <taxon>Lactobacillales</taxon>
        <taxon>Lactobacillaceae</taxon>
        <taxon>Lactobacillus</taxon>
    </lineage>
</organism>